<keyword id="KW-1185">Reference proteome</keyword>
<keyword id="KW-0694">RNA-binding</keyword>
<keyword id="KW-0804">Transcription</keyword>
<keyword id="KW-0889">Transcription antitermination</keyword>
<keyword id="KW-0805">Transcription regulation</keyword>
<dbReference type="EMBL" id="AE017282">
    <property type="protein sequence ID" value="AAU92315.1"/>
    <property type="molecule type" value="Genomic_DNA"/>
</dbReference>
<dbReference type="RefSeq" id="WP_010960912.1">
    <property type="nucleotide sequence ID" value="NC_002977.6"/>
</dbReference>
<dbReference type="SMR" id="Q607V0"/>
<dbReference type="STRING" id="243233.MCA1654"/>
<dbReference type="GeneID" id="88223910"/>
<dbReference type="KEGG" id="mca:MCA1654"/>
<dbReference type="eggNOG" id="COG0781">
    <property type="taxonomic scope" value="Bacteria"/>
</dbReference>
<dbReference type="HOGENOM" id="CLU_087843_4_1_6"/>
<dbReference type="Proteomes" id="UP000006821">
    <property type="component" value="Chromosome"/>
</dbReference>
<dbReference type="GO" id="GO:0005829">
    <property type="term" value="C:cytosol"/>
    <property type="evidence" value="ECO:0007669"/>
    <property type="project" value="TreeGrafter"/>
</dbReference>
<dbReference type="GO" id="GO:0003723">
    <property type="term" value="F:RNA binding"/>
    <property type="evidence" value="ECO:0007669"/>
    <property type="project" value="UniProtKB-UniRule"/>
</dbReference>
<dbReference type="GO" id="GO:0006353">
    <property type="term" value="P:DNA-templated transcription termination"/>
    <property type="evidence" value="ECO:0007669"/>
    <property type="project" value="UniProtKB-UniRule"/>
</dbReference>
<dbReference type="GO" id="GO:0031564">
    <property type="term" value="P:transcription antitermination"/>
    <property type="evidence" value="ECO:0007669"/>
    <property type="project" value="UniProtKB-KW"/>
</dbReference>
<dbReference type="Gene3D" id="1.10.940.10">
    <property type="entry name" value="NusB-like"/>
    <property type="match status" value="1"/>
</dbReference>
<dbReference type="HAMAP" id="MF_00073">
    <property type="entry name" value="NusB"/>
    <property type="match status" value="1"/>
</dbReference>
<dbReference type="InterPro" id="IPR035926">
    <property type="entry name" value="NusB-like_sf"/>
</dbReference>
<dbReference type="InterPro" id="IPR011605">
    <property type="entry name" value="NusB_fam"/>
</dbReference>
<dbReference type="InterPro" id="IPR006027">
    <property type="entry name" value="NusB_RsmB_TIM44"/>
</dbReference>
<dbReference type="NCBIfam" id="TIGR01951">
    <property type="entry name" value="nusB"/>
    <property type="match status" value="1"/>
</dbReference>
<dbReference type="PANTHER" id="PTHR11078:SF3">
    <property type="entry name" value="ANTITERMINATION NUSB DOMAIN-CONTAINING PROTEIN"/>
    <property type="match status" value="1"/>
</dbReference>
<dbReference type="PANTHER" id="PTHR11078">
    <property type="entry name" value="N UTILIZATION SUBSTANCE PROTEIN B-RELATED"/>
    <property type="match status" value="1"/>
</dbReference>
<dbReference type="Pfam" id="PF01029">
    <property type="entry name" value="NusB"/>
    <property type="match status" value="1"/>
</dbReference>
<dbReference type="SUPFAM" id="SSF48013">
    <property type="entry name" value="NusB-like"/>
    <property type="match status" value="1"/>
</dbReference>
<gene>
    <name evidence="1" type="primary">nusB</name>
    <name type="ordered locus">MCA1654</name>
</gene>
<reference key="1">
    <citation type="journal article" date="2004" name="PLoS Biol.">
        <title>Genomic insights into methanotrophy: the complete genome sequence of Methylococcus capsulatus (Bath).</title>
        <authorList>
            <person name="Ward N.L."/>
            <person name="Larsen O."/>
            <person name="Sakwa J."/>
            <person name="Bruseth L."/>
            <person name="Khouri H.M."/>
            <person name="Durkin A.S."/>
            <person name="Dimitrov G."/>
            <person name="Jiang L."/>
            <person name="Scanlan D."/>
            <person name="Kang K.H."/>
            <person name="Lewis M.R."/>
            <person name="Nelson K.E."/>
            <person name="Methe B.A."/>
            <person name="Wu M."/>
            <person name="Heidelberg J.F."/>
            <person name="Paulsen I.T."/>
            <person name="Fouts D.E."/>
            <person name="Ravel J."/>
            <person name="Tettelin H."/>
            <person name="Ren Q."/>
            <person name="Read T.D."/>
            <person name="DeBoy R.T."/>
            <person name="Seshadri R."/>
            <person name="Salzberg S.L."/>
            <person name="Jensen H.B."/>
            <person name="Birkeland N.K."/>
            <person name="Nelson W.C."/>
            <person name="Dodson R.J."/>
            <person name="Grindhaug S.H."/>
            <person name="Holt I.E."/>
            <person name="Eidhammer I."/>
            <person name="Jonasen I."/>
            <person name="Vanaken S."/>
            <person name="Utterback T.R."/>
            <person name="Feldblyum T.V."/>
            <person name="Fraser C.M."/>
            <person name="Lillehaug J.R."/>
            <person name="Eisen J.A."/>
        </authorList>
    </citation>
    <scope>NUCLEOTIDE SEQUENCE [LARGE SCALE GENOMIC DNA]</scope>
    <source>
        <strain>ATCC 33009 / NCIMB 11132 / Bath</strain>
    </source>
</reference>
<comment type="function">
    <text evidence="1">Involved in transcription antitermination. Required for transcription of ribosomal RNA (rRNA) genes. Binds specifically to the boxA antiterminator sequence of the ribosomal RNA (rrn) operons.</text>
</comment>
<comment type="similarity">
    <text evidence="1">Belongs to the NusB family.</text>
</comment>
<sequence>MSLARTLARRAAVQAVYQWQLARDSLPDIERQFVEELQLAKSLYRRHAEGFELSPPEREQLEELLEKFGRSQGTDEVEEEDVTLEQRASQCQVPDVQVGYFKELLHGVANNLALLDAALAKYLDRPIDEVDPVERAILRIGCYEFMRRPETPYRVILNEAINLAKEFGAAQSYRYVNGILDRVAHECRAVEMAARRRG</sequence>
<name>NUSB_METCA</name>
<protein>
    <recommendedName>
        <fullName evidence="1">Transcription antitermination protein NusB</fullName>
    </recommendedName>
    <alternativeName>
        <fullName evidence="1">Antitermination factor NusB</fullName>
    </alternativeName>
</protein>
<evidence type="ECO:0000255" key="1">
    <source>
        <dbReference type="HAMAP-Rule" id="MF_00073"/>
    </source>
</evidence>
<proteinExistence type="inferred from homology"/>
<accession>Q607V0</accession>
<organism>
    <name type="scientific">Methylococcus capsulatus (strain ATCC 33009 / NCIMB 11132 / Bath)</name>
    <dbReference type="NCBI Taxonomy" id="243233"/>
    <lineage>
        <taxon>Bacteria</taxon>
        <taxon>Pseudomonadati</taxon>
        <taxon>Pseudomonadota</taxon>
        <taxon>Gammaproteobacteria</taxon>
        <taxon>Methylococcales</taxon>
        <taxon>Methylococcaceae</taxon>
        <taxon>Methylococcus</taxon>
    </lineage>
</organism>
<feature type="chain" id="PRO_0000265544" description="Transcription antitermination protein NusB">
    <location>
        <begin position="1"/>
        <end position="198"/>
    </location>
</feature>